<dbReference type="EMBL" id="CP000463">
    <property type="protein sequence ID" value="ABJ08816.1"/>
    <property type="molecule type" value="Genomic_DNA"/>
</dbReference>
<dbReference type="SMR" id="Q07GW8"/>
<dbReference type="STRING" id="316055.RPE_4897"/>
<dbReference type="KEGG" id="rpe:RPE_4897"/>
<dbReference type="eggNOG" id="COG0326">
    <property type="taxonomic scope" value="Bacteria"/>
</dbReference>
<dbReference type="HOGENOM" id="CLU_006684_3_0_5"/>
<dbReference type="OrthoDB" id="9802640at2"/>
<dbReference type="GO" id="GO:0005737">
    <property type="term" value="C:cytoplasm"/>
    <property type="evidence" value="ECO:0007669"/>
    <property type="project" value="UniProtKB-SubCell"/>
</dbReference>
<dbReference type="GO" id="GO:0005524">
    <property type="term" value="F:ATP binding"/>
    <property type="evidence" value="ECO:0007669"/>
    <property type="project" value="UniProtKB-UniRule"/>
</dbReference>
<dbReference type="GO" id="GO:0016887">
    <property type="term" value="F:ATP hydrolysis activity"/>
    <property type="evidence" value="ECO:0007669"/>
    <property type="project" value="InterPro"/>
</dbReference>
<dbReference type="GO" id="GO:0140662">
    <property type="term" value="F:ATP-dependent protein folding chaperone"/>
    <property type="evidence" value="ECO:0007669"/>
    <property type="project" value="InterPro"/>
</dbReference>
<dbReference type="GO" id="GO:0051082">
    <property type="term" value="F:unfolded protein binding"/>
    <property type="evidence" value="ECO:0007669"/>
    <property type="project" value="UniProtKB-UniRule"/>
</dbReference>
<dbReference type="CDD" id="cd16927">
    <property type="entry name" value="HATPase_Hsp90-like"/>
    <property type="match status" value="1"/>
</dbReference>
<dbReference type="FunFam" id="3.30.565.10:FF:000009">
    <property type="entry name" value="Molecular chaperone HtpG"/>
    <property type="match status" value="1"/>
</dbReference>
<dbReference type="Gene3D" id="3.30.230.80">
    <property type="match status" value="1"/>
</dbReference>
<dbReference type="Gene3D" id="3.40.50.11260">
    <property type="match status" value="1"/>
</dbReference>
<dbReference type="Gene3D" id="1.20.120.790">
    <property type="entry name" value="Heat shock protein 90, C-terminal domain"/>
    <property type="match status" value="1"/>
</dbReference>
<dbReference type="Gene3D" id="3.30.565.10">
    <property type="entry name" value="Histidine kinase-like ATPase, C-terminal domain"/>
    <property type="match status" value="1"/>
</dbReference>
<dbReference type="HAMAP" id="MF_00505">
    <property type="entry name" value="HSP90"/>
    <property type="match status" value="1"/>
</dbReference>
<dbReference type="InterPro" id="IPR036890">
    <property type="entry name" value="HATPase_C_sf"/>
</dbReference>
<dbReference type="InterPro" id="IPR037196">
    <property type="entry name" value="HSP90_C"/>
</dbReference>
<dbReference type="InterPro" id="IPR001404">
    <property type="entry name" value="Hsp90_fam"/>
</dbReference>
<dbReference type="InterPro" id="IPR020575">
    <property type="entry name" value="Hsp90_N"/>
</dbReference>
<dbReference type="InterPro" id="IPR020568">
    <property type="entry name" value="Ribosomal_Su5_D2-typ_SF"/>
</dbReference>
<dbReference type="NCBIfam" id="NF003555">
    <property type="entry name" value="PRK05218.1"/>
    <property type="match status" value="1"/>
</dbReference>
<dbReference type="PANTHER" id="PTHR11528">
    <property type="entry name" value="HEAT SHOCK PROTEIN 90 FAMILY MEMBER"/>
    <property type="match status" value="1"/>
</dbReference>
<dbReference type="Pfam" id="PF13589">
    <property type="entry name" value="HATPase_c_3"/>
    <property type="match status" value="1"/>
</dbReference>
<dbReference type="Pfam" id="PF00183">
    <property type="entry name" value="HSP90"/>
    <property type="match status" value="1"/>
</dbReference>
<dbReference type="PIRSF" id="PIRSF002583">
    <property type="entry name" value="Hsp90"/>
    <property type="match status" value="1"/>
</dbReference>
<dbReference type="PRINTS" id="PR00775">
    <property type="entry name" value="HEATSHOCK90"/>
</dbReference>
<dbReference type="SMART" id="SM00387">
    <property type="entry name" value="HATPase_c"/>
    <property type="match status" value="1"/>
</dbReference>
<dbReference type="SUPFAM" id="SSF55874">
    <property type="entry name" value="ATPase domain of HSP90 chaperone/DNA topoisomerase II/histidine kinase"/>
    <property type="match status" value="1"/>
</dbReference>
<dbReference type="SUPFAM" id="SSF110942">
    <property type="entry name" value="HSP90 C-terminal domain"/>
    <property type="match status" value="1"/>
</dbReference>
<dbReference type="SUPFAM" id="SSF54211">
    <property type="entry name" value="Ribosomal protein S5 domain 2-like"/>
    <property type="match status" value="1"/>
</dbReference>
<accession>Q07GW8</accession>
<organism>
    <name type="scientific">Rhodopseudomonas palustris (strain BisA53)</name>
    <dbReference type="NCBI Taxonomy" id="316055"/>
    <lineage>
        <taxon>Bacteria</taxon>
        <taxon>Pseudomonadati</taxon>
        <taxon>Pseudomonadota</taxon>
        <taxon>Alphaproteobacteria</taxon>
        <taxon>Hyphomicrobiales</taxon>
        <taxon>Nitrobacteraceae</taxon>
        <taxon>Rhodopseudomonas</taxon>
    </lineage>
</organism>
<evidence type="ECO:0000255" key="1">
    <source>
        <dbReference type="HAMAP-Rule" id="MF_00505"/>
    </source>
</evidence>
<protein>
    <recommendedName>
        <fullName evidence="1">Chaperone protein HtpG</fullName>
    </recommendedName>
    <alternativeName>
        <fullName evidence="1">Heat shock protein HtpG</fullName>
    </alternativeName>
    <alternativeName>
        <fullName evidence="1">High temperature protein G</fullName>
    </alternativeName>
</protein>
<sequence length="620" mass="68345">MTTTDTAPQTQPFQAEVAELLNLMVHSVYSETEIFLRELISNGSDALDKLRYEAISKPDLMEAGGTPKIQIVPKKAPDTLSVIDNGIGMDRQELIDNLGTIAKSGTKSFLTKLTEAKDGSNLIGQFGVGFYAAFMVADRIVVTSRRAGSTEAWTWTSSGGAGFEIAPASAEEAERIVRGTEIVLHLKPEAAKYLEAYQIERIVSAYSDNIQFPIELVPEEGEARQINSASALWQRSKSELAAEDYKQAYKSIANAFDDPAMTLHYRAEGRYSYAVMLFAPSTKPFDLFEPQRKGHVKLYVRRVFITDDADLLPAYLRFIRGVIDSEDLPLNLSREMLQNNPQLVQIRKAVTGKVIGELESLGEKDPENFAKIWDAFGPVIKEGIWEDYERREKLLALSRFTTTKGDNRTLKNYVEDLRDNQTEIYYLVGDSLERLKSNPKLESAAARGIEVLLLTDPVDAFWTSAPLDFGGKPLKSLSQGDVNFDLIPTTDEAKDEQPKPETDEALVIATIKDALGERVSDVRASQRLTASASCLIAGGQGPDRALERMLAQQNRGGASKPILEINLRHPLVAAIGRPGNADAADLSLLLLEQAQILDGELPEDPAGFAGRINRLVLRAL</sequence>
<comment type="function">
    <text evidence="1">Molecular chaperone. Has ATPase activity.</text>
</comment>
<comment type="subunit">
    <text evidence="1">Homodimer.</text>
</comment>
<comment type="subcellular location">
    <subcellularLocation>
        <location evidence="1">Cytoplasm</location>
    </subcellularLocation>
</comment>
<comment type="similarity">
    <text evidence="1">Belongs to the heat shock protein 90 family.</text>
</comment>
<feature type="chain" id="PRO_1000014943" description="Chaperone protein HtpG">
    <location>
        <begin position="1"/>
        <end position="620"/>
    </location>
</feature>
<feature type="region of interest" description="A; substrate-binding" evidence="1">
    <location>
        <begin position="1"/>
        <end position="334"/>
    </location>
</feature>
<feature type="region of interest" description="B" evidence="1">
    <location>
        <begin position="335"/>
        <end position="548"/>
    </location>
</feature>
<feature type="region of interest" description="C" evidence="1">
    <location>
        <begin position="549"/>
        <end position="620"/>
    </location>
</feature>
<keyword id="KW-0067">ATP-binding</keyword>
<keyword id="KW-0143">Chaperone</keyword>
<keyword id="KW-0963">Cytoplasm</keyword>
<keyword id="KW-0547">Nucleotide-binding</keyword>
<keyword id="KW-0346">Stress response</keyword>
<gene>
    <name evidence="1" type="primary">htpG</name>
    <name type="ordered locus">RPE_4897</name>
</gene>
<reference key="1">
    <citation type="submission" date="2006-09" db="EMBL/GenBank/DDBJ databases">
        <title>Complete sequence of Rhodopseudomonas palustris BisA53.</title>
        <authorList>
            <consortium name="US DOE Joint Genome Institute"/>
            <person name="Copeland A."/>
            <person name="Lucas S."/>
            <person name="Lapidus A."/>
            <person name="Barry K."/>
            <person name="Detter J.C."/>
            <person name="Glavina del Rio T."/>
            <person name="Hammon N."/>
            <person name="Israni S."/>
            <person name="Dalin E."/>
            <person name="Tice H."/>
            <person name="Pitluck S."/>
            <person name="Chain P."/>
            <person name="Malfatti S."/>
            <person name="Shin M."/>
            <person name="Vergez L."/>
            <person name="Schmutz J."/>
            <person name="Larimer F."/>
            <person name="Land M."/>
            <person name="Hauser L."/>
            <person name="Pelletier D.A."/>
            <person name="Kyrpides N."/>
            <person name="Kim E."/>
            <person name="Harwood C.S."/>
            <person name="Oda Y."/>
            <person name="Richardson P."/>
        </authorList>
    </citation>
    <scope>NUCLEOTIDE SEQUENCE [LARGE SCALE GENOMIC DNA]</scope>
    <source>
        <strain>BisA53</strain>
    </source>
</reference>
<proteinExistence type="inferred from homology"/>
<name>HTPG_RHOP5</name>